<name>CECC_DROME</name>
<gene>
    <name type="primary">CecC</name>
    <name type="ORF">CG1373</name>
</gene>
<keyword id="KW-0027">Amidation</keyword>
<keyword id="KW-0044">Antibiotic</keyword>
<keyword id="KW-0929">Antimicrobial</keyword>
<keyword id="KW-0391">Immunity</keyword>
<keyword id="KW-0399">Innate immunity</keyword>
<keyword id="KW-1185">Reference proteome</keyword>
<keyword id="KW-0964">Secreted</keyword>
<keyword id="KW-0732">Signal</keyword>
<reference key="1">
    <citation type="journal article" date="1992" name="Eur. J. Biochem.">
        <title>CecC, a cecropin gene expressed during metamorphosis in Drosophila pupae.</title>
        <authorList>
            <person name="Tryselius Y."/>
            <person name="Samakovlis C."/>
            <person name="Kimbrell D.A."/>
            <person name="Hultmark D."/>
        </authorList>
    </citation>
    <scope>NUCLEOTIDE SEQUENCE [GENOMIC DNA]</scope>
    <scope>INDUCTION</scope>
    <scope>TISSUE SPECIFICITY</scope>
    <scope>DEVELOPMENTAL STAGE</scope>
    <source>
        <strain>Canton-S</strain>
    </source>
</reference>
<reference key="2">
    <citation type="journal article" date="1997" name="Genetics">
        <title>Molecular population genetics of Drosophila immune system genes.</title>
        <authorList>
            <person name="Clark A.G."/>
            <person name="Wang L."/>
        </authorList>
    </citation>
    <scope>NUCLEOTIDE SEQUENCE [GENOMIC DNA]</scope>
    <source>
        <strain>B009</strain>
        <strain>B101</strain>
        <strain>B115</strain>
        <strain>B202</strain>
        <strain>B205</strain>
        <strain>B208</strain>
        <strain>B316</strain>
        <strain>M31</strain>
        <strain>Z10</strain>
        <strain>Z18</strain>
        <strain>Z22</strain>
        <strain>Z24</strain>
        <strain>Z5</strain>
    </source>
</reference>
<reference key="3">
    <citation type="journal article" date="2000" name="Science">
        <title>The genome sequence of Drosophila melanogaster.</title>
        <authorList>
            <person name="Adams M.D."/>
            <person name="Celniker S.E."/>
            <person name="Holt R.A."/>
            <person name="Evans C.A."/>
            <person name="Gocayne J.D."/>
            <person name="Amanatides P.G."/>
            <person name="Scherer S.E."/>
            <person name="Li P.W."/>
            <person name="Hoskins R.A."/>
            <person name="Galle R.F."/>
            <person name="George R.A."/>
            <person name="Lewis S.E."/>
            <person name="Richards S."/>
            <person name="Ashburner M."/>
            <person name="Henderson S.N."/>
            <person name="Sutton G.G."/>
            <person name="Wortman J.R."/>
            <person name="Yandell M.D."/>
            <person name="Zhang Q."/>
            <person name="Chen L.X."/>
            <person name="Brandon R.C."/>
            <person name="Rogers Y.-H.C."/>
            <person name="Blazej R.G."/>
            <person name="Champe M."/>
            <person name="Pfeiffer B.D."/>
            <person name="Wan K.H."/>
            <person name="Doyle C."/>
            <person name="Baxter E.G."/>
            <person name="Helt G."/>
            <person name="Nelson C.R."/>
            <person name="Miklos G.L.G."/>
            <person name="Abril J.F."/>
            <person name="Agbayani A."/>
            <person name="An H.-J."/>
            <person name="Andrews-Pfannkoch C."/>
            <person name="Baldwin D."/>
            <person name="Ballew R.M."/>
            <person name="Basu A."/>
            <person name="Baxendale J."/>
            <person name="Bayraktaroglu L."/>
            <person name="Beasley E.M."/>
            <person name="Beeson K.Y."/>
            <person name="Benos P.V."/>
            <person name="Berman B.P."/>
            <person name="Bhandari D."/>
            <person name="Bolshakov S."/>
            <person name="Borkova D."/>
            <person name="Botchan M.R."/>
            <person name="Bouck J."/>
            <person name="Brokstein P."/>
            <person name="Brottier P."/>
            <person name="Burtis K.C."/>
            <person name="Busam D.A."/>
            <person name="Butler H."/>
            <person name="Cadieu E."/>
            <person name="Center A."/>
            <person name="Chandra I."/>
            <person name="Cherry J.M."/>
            <person name="Cawley S."/>
            <person name="Dahlke C."/>
            <person name="Davenport L.B."/>
            <person name="Davies P."/>
            <person name="de Pablos B."/>
            <person name="Delcher A."/>
            <person name="Deng Z."/>
            <person name="Mays A.D."/>
            <person name="Dew I."/>
            <person name="Dietz S.M."/>
            <person name="Dodson K."/>
            <person name="Doup L.E."/>
            <person name="Downes M."/>
            <person name="Dugan-Rocha S."/>
            <person name="Dunkov B.C."/>
            <person name="Dunn P."/>
            <person name="Durbin K.J."/>
            <person name="Evangelista C.C."/>
            <person name="Ferraz C."/>
            <person name="Ferriera S."/>
            <person name="Fleischmann W."/>
            <person name="Fosler C."/>
            <person name="Gabrielian A.E."/>
            <person name="Garg N.S."/>
            <person name="Gelbart W.M."/>
            <person name="Glasser K."/>
            <person name="Glodek A."/>
            <person name="Gong F."/>
            <person name="Gorrell J.H."/>
            <person name="Gu Z."/>
            <person name="Guan P."/>
            <person name="Harris M."/>
            <person name="Harris N.L."/>
            <person name="Harvey D.A."/>
            <person name="Heiman T.J."/>
            <person name="Hernandez J.R."/>
            <person name="Houck J."/>
            <person name="Hostin D."/>
            <person name="Houston K.A."/>
            <person name="Howland T.J."/>
            <person name="Wei M.-H."/>
            <person name="Ibegwam C."/>
            <person name="Jalali M."/>
            <person name="Kalush F."/>
            <person name="Karpen G.H."/>
            <person name="Ke Z."/>
            <person name="Kennison J.A."/>
            <person name="Ketchum K.A."/>
            <person name="Kimmel B.E."/>
            <person name="Kodira C.D."/>
            <person name="Kraft C.L."/>
            <person name="Kravitz S."/>
            <person name="Kulp D."/>
            <person name="Lai Z."/>
            <person name="Lasko P."/>
            <person name="Lei Y."/>
            <person name="Levitsky A.A."/>
            <person name="Li J.H."/>
            <person name="Li Z."/>
            <person name="Liang Y."/>
            <person name="Lin X."/>
            <person name="Liu X."/>
            <person name="Mattei B."/>
            <person name="McIntosh T.C."/>
            <person name="McLeod M.P."/>
            <person name="McPherson D."/>
            <person name="Merkulov G."/>
            <person name="Milshina N.V."/>
            <person name="Mobarry C."/>
            <person name="Morris J."/>
            <person name="Moshrefi A."/>
            <person name="Mount S.M."/>
            <person name="Moy M."/>
            <person name="Murphy B."/>
            <person name="Murphy L."/>
            <person name="Muzny D.M."/>
            <person name="Nelson D.L."/>
            <person name="Nelson D.R."/>
            <person name="Nelson K.A."/>
            <person name="Nixon K."/>
            <person name="Nusskern D.R."/>
            <person name="Pacleb J.M."/>
            <person name="Palazzolo M."/>
            <person name="Pittman G.S."/>
            <person name="Pan S."/>
            <person name="Pollard J."/>
            <person name="Puri V."/>
            <person name="Reese M.G."/>
            <person name="Reinert K."/>
            <person name="Remington K."/>
            <person name="Saunders R.D.C."/>
            <person name="Scheeler F."/>
            <person name="Shen H."/>
            <person name="Shue B.C."/>
            <person name="Siden-Kiamos I."/>
            <person name="Simpson M."/>
            <person name="Skupski M.P."/>
            <person name="Smith T.J."/>
            <person name="Spier E."/>
            <person name="Spradling A.C."/>
            <person name="Stapleton M."/>
            <person name="Strong R."/>
            <person name="Sun E."/>
            <person name="Svirskas R."/>
            <person name="Tector C."/>
            <person name="Turner R."/>
            <person name="Venter E."/>
            <person name="Wang A.H."/>
            <person name="Wang X."/>
            <person name="Wang Z.-Y."/>
            <person name="Wassarman D.A."/>
            <person name="Weinstock G.M."/>
            <person name="Weissenbach J."/>
            <person name="Williams S.M."/>
            <person name="Woodage T."/>
            <person name="Worley K.C."/>
            <person name="Wu D."/>
            <person name="Yang S."/>
            <person name="Yao Q.A."/>
            <person name="Ye J."/>
            <person name="Yeh R.-F."/>
            <person name="Zaveri J.S."/>
            <person name="Zhan M."/>
            <person name="Zhang G."/>
            <person name="Zhao Q."/>
            <person name="Zheng L."/>
            <person name="Zheng X.H."/>
            <person name="Zhong F.N."/>
            <person name="Zhong W."/>
            <person name="Zhou X."/>
            <person name="Zhu S.C."/>
            <person name="Zhu X."/>
            <person name="Smith H.O."/>
            <person name="Gibbs R.A."/>
            <person name="Myers E.W."/>
            <person name="Rubin G.M."/>
            <person name="Venter J.C."/>
        </authorList>
    </citation>
    <scope>NUCLEOTIDE SEQUENCE [LARGE SCALE GENOMIC DNA]</scope>
    <source>
        <strain>Berkeley</strain>
    </source>
</reference>
<reference key="4">
    <citation type="journal article" date="2002" name="Genome Biol.">
        <title>Annotation of the Drosophila melanogaster euchromatic genome: a systematic review.</title>
        <authorList>
            <person name="Misra S."/>
            <person name="Crosby M.A."/>
            <person name="Mungall C.J."/>
            <person name="Matthews B.B."/>
            <person name="Campbell K.S."/>
            <person name="Hradecky P."/>
            <person name="Huang Y."/>
            <person name="Kaminker J.S."/>
            <person name="Millburn G.H."/>
            <person name="Prochnik S.E."/>
            <person name="Smith C.D."/>
            <person name="Tupy J.L."/>
            <person name="Whitfield E.J."/>
            <person name="Bayraktaroglu L."/>
            <person name="Berman B.P."/>
            <person name="Bettencourt B.R."/>
            <person name="Celniker S.E."/>
            <person name="de Grey A.D.N.J."/>
            <person name="Drysdale R.A."/>
            <person name="Harris N.L."/>
            <person name="Richter J."/>
            <person name="Russo S."/>
            <person name="Schroeder A.J."/>
            <person name="Shu S.Q."/>
            <person name="Stapleton M."/>
            <person name="Yamada C."/>
            <person name="Ashburner M."/>
            <person name="Gelbart W.M."/>
            <person name="Rubin G.M."/>
            <person name="Lewis S.E."/>
        </authorList>
    </citation>
    <scope>GENOME REANNOTATION</scope>
    <source>
        <strain>Berkeley</strain>
    </source>
</reference>
<reference key="5">
    <citation type="journal article" date="2002" name="Genome Biol.">
        <title>A Drosophila full-length cDNA resource.</title>
        <authorList>
            <person name="Stapleton M."/>
            <person name="Carlson J.W."/>
            <person name="Brokstein P."/>
            <person name="Yu C."/>
            <person name="Champe M."/>
            <person name="George R.A."/>
            <person name="Guarin H."/>
            <person name="Kronmiller B."/>
            <person name="Pacleb J.M."/>
            <person name="Park S."/>
            <person name="Wan K.H."/>
            <person name="Rubin G.M."/>
            <person name="Celniker S.E."/>
        </authorList>
    </citation>
    <scope>NUCLEOTIDE SEQUENCE [LARGE SCALE MRNA]</scope>
    <source>
        <strain>Berkeley</strain>
        <tissue>Head</tissue>
    </source>
</reference>
<evidence type="ECO:0000250" key="1"/>
<evidence type="ECO:0000269" key="2">
    <source>
    </source>
</evidence>
<evidence type="ECO:0000305" key="3"/>
<comment type="function">
    <text>Cecropins have lytic and antibacterial activity against several Gram-positive and Gram-negative bacteria.</text>
</comment>
<comment type="subcellular location">
    <subcellularLocation>
        <location>Secreted</location>
    </subcellularLocation>
</comment>
<comment type="tissue specificity">
    <text evidence="2">In the anterior end of the larval hindgut and in other larval tissues that are undergoing histolysis.</text>
</comment>
<comment type="developmental stage">
    <text evidence="2">Expressed during metamorphosis in pupae.</text>
</comment>
<comment type="induction">
    <text evidence="2">Induced as part of the humoral response to a bacterial invasion.</text>
</comment>
<comment type="similarity">
    <text evidence="3">Belongs to the cecropin family.</text>
</comment>
<sequence length="63" mass="6813">MNFYKIFVFVALILAISIGQSEAGWLKKLGKRIERIGQHTRDATIQGLGIAQQAANVAATARG</sequence>
<protein>
    <recommendedName>
        <fullName>Cecropin-C</fullName>
    </recommendedName>
</protein>
<feature type="signal peptide">
    <location>
        <begin position="1"/>
        <end position="23"/>
    </location>
</feature>
<feature type="chain" id="PRO_0000004848" description="Cecropin-C">
    <location>
        <begin position="24"/>
        <end position="62"/>
    </location>
</feature>
<feature type="modified residue" description="Arginine amide" evidence="1">
    <location>
        <position position="62"/>
    </location>
</feature>
<feature type="sequence variant" description="In strain: Z10.">
    <original>KIFVFVALILAI</original>
    <variation>MIYVRVGRTQAS</variation>
    <location>
        <begin position="5"/>
        <end position="16"/>
    </location>
</feature>
<feature type="sequence variant" description="In strain: B205 and B208.">
    <original>K</original>
    <variation>Q</variation>
    <location>
        <position position="5"/>
    </location>
</feature>
<feature type="sequence variant" description="In strain: Z10, Z18, Z22 and Z24.">
    <original>Q</original>
    <variation>H</variation>
    <location>
        <position position="20"/>
    </location>
</feature>
<feature type="sequence variant" description="In strain: Z10 and Z22.">
    <original>W</original>
    <variation>G</variation>
    <location>
        <position position="25"/>
    </location>
</feature>
<feature type="sequence variant" description="In strain: Z24.">
    <original>L</original>
    <variation>R</variation>
    <location>
        <position position="26"/>
    </location>
</feature>
<feature type="sequence variant" description="In strain: Z10, Z18 and Z22.">
    <original>L</original>
    <variation>W</variation>
    <location>
        <position position="26"/>
    </location>
</feature>
<feature type="sequence variant" description="In strain: Z10 and Z18.">
    <original>K</original>
    <variation>R</variation>
    <location>
        <position position="27"/>
    </location>
</feature>
<feature type="sequence variant" description="In strain: B316.">
    <original>Q</original>
    <variation>R</variation>
    <location>
        <position position="53"/>
    </location>
</feature>
<feature type="sequence variant" description="In strain: B202.">
    <original>A</original>
    <variation>T</variation>
    <location>
        <position position="54"/>
    </location>
</feature>
<dbReference type="EMBL" id="Z11167">
    <property type="protein sequence ID" value="CAA77559.1"/>
    <property type="molecule type" value="Genomic_DNA"/>
</dbReference>
<dbReference type="EMBL" id="AF019007">
    <property type="protein sequence ID" value="AAB82504.1"/>
    <property type="molecule type" value="Genomic_DNA"/>
</dbReference>
<dbReference type="EMBL" id="AF019008">
    <property type="protein sequence ID" value="AAB82505.1"/>
    <property type="molecule type" value="Genomic_DNA"/>
</dbReference>
<dbReference type="EMBL" id="AF019009">
    <property type="protein sequence ID" value="AAB82506.1"/>
    <property type="molecule type" value="Genomic_DNA"/>
</dbReference>
<dbReference type="EMBL" id="AF019010">
    <property type="protein sequence ID" value="AAB82507.1"/>
    <property type="molecule type" value="Genomic_DNA"/>
</dbReference>
<dbReference type="EMBL" id="AF019011">
    <property type="protein sequence ID" value="AAB82508.1"/>
    <property type="molecule type" value="Genomic_DNA"/>
</dbReference>
<dbReference type="EMBL" id="AF019012">
    <property type="protein sequence ID" value="AAB82509.1"/>
    <property type="molecule type" value="Genomic_DNA"/>
</dbReference>
<dbReference type="EMBL" id="AF019013">
    <property type="protein sequence ID" value="AAB82510.1"/>
    <property type="molecule type" value="Genomic_DNA"/>
</dbReference>
<dbReference type="EMBL" id="AF019014">
    <property type="protein sequence ID" value="AAB82511.1"/>
    <property type="molecule type" value="Genomic_DNA"/>
</dbReference>
<dbReference type="EMBL" id="AF019015">
    <property type="protein sequence ID" value="AAB82512.1"/>
    <property type="molecule type" value="Genomic_DNA"/>
</dbReference>
<dbReference type="EMBL" id="AF019016">
    <property type="protein sequence ID" value="AAB82513.1"/>
    <property type="molecule type" value="Genomic_DNA"/>
</dbReference>
<dbReference type="EMBL" id="AF019017">
    <property type="protein sequence ID" value="AAB82514.1"/>
    <property type="molecule type" value="Genomic_DNA"/>
</dbReference>
<dbReference type="EMBL" id="AF019018">
    <property type="protein sequence ID" value="AAB82515.1"/>
    <property type="molecule type" value="Genomic_DNA"/>
</dbReference>
<dbReference type="EMBL" id="AE014297">
    <property type="protein sequence ID" value="AAF57028.1"/>
    <property type="molecule type" value="Genomic_DNA"/>
</dbReference>
<dbReference type="EMBL" id="AY113583">
    <property type="protein sequence ID" value="AAM29588.1"/>
    <property type="molecule type" value="mRNA"/>
</dbReference>
<dbReference type="PIR" id="S23501">
    <property type="entry name" value="S23501"/>
</dbReference>
<dbReference type="RefSeq" id="NP_524591.1">
    <property type="nucleotide sequence ID" value="NM_079852.3"/>
</dbReference>
<dbReference type="SMR" id="O16829"/>
<dbReference type="BioGRID" id="68455">
    <property type="interactions" value="2"/>
</dbReference>
<dbReference type="FunCoup" id="O16829">
    <property type="interactions" value="107"/>
</dbReference>
<dbReference type="IntAct" id="O16829">
    <property type="interactions" value="2"/>
</dbReference>
<dbReference type="STRING" id="7227.FBpp0084980"/>
<dbReference type="PaxDb" id="7227-FBpp0084980"/>
<dbReference type="DNASU" id="43599"/>
<dbReference type="EnsemblMetazoa" id="FBtr0085616">
    <property type="protein sequence ID" value="FBpp0084980"/>
    <property type="gene ID" value="FBgn0000279"/>
</dbReference>
<dbReference type="GeneID" id="43599"/>
<dbReference type="KEGG" id="dme:Dmel_CG1373"/>
<dbReference type="AGR" id="FB:FBgn0000279"/>
<dbReference type="CTD" id="43599"/>
<dbReference type="FlyBase" id="FBgn0000279">
    <property type="gene designation" value="CecC"/>
</dbReference>
<dbReference type="VEuPathDB" id="VectorBase:FBgn0000279"/>
<dbReference type="eggNOG" id="ENOG502TCNK">
    <property type="taxonomic scope" value="Eukaryota"/>
</dbReference>
<dbReference type="GeneTree" id="ENSGT00540000073806"/>
<dbReference type="HOGENOM" id="CLU_187909_1_0_1"/>
<dbReference type="InParanoid" id="O16829"/>
<dbReference type="OMA" id="IAICNVQ"/>
<dbReference type="OrthoDB" id="7410372at2759"/>
<dbReference type="PhylomeDB" id="O16829"/>
<dbReference type="BioGRID-ORCS" id="43599">
    <property type="hits" value="0 hits in 1 CRISPR screen"/>
</dbReference>
<dbReference type="ChiTaRS" id="CecC">
    <property type="organism name" value="fly"/>
</dbReference>
<dbReference type="GenomeRNAi" id="43599"/>
<dbReference type="PRO" id="PR:O16829"/>
<dbReference type="Proteomes" id="UP000000803">
    <property type="component" value="Chromosome 3R"/>
</dbReference>
<dbReference type="Bgee" id="FBgn0000279">
    <property type="expression patterns" value="Expressed in hemocyte (sensu Nematoda and Protostomia) in dorsal vessel heart and 33 other cell types or tissues"/>
</dbReference>
<dbReference type="ExpressionAtlas" id="O16829">
    <property type="expression patterns" value="baseline and differential"/>
</dbReference>
<dbReference type="GO" id="GO:0005576">
    <property type="term" value="C:extracellular region"/>
    <property type="evidence" value="ECO:0000314"/>
    <property type="project" value="UniProtKB"/>
</dbReference>
<dbReference type="GO" id="GO:0005615">
    <property type="term" value="C:extracellular space"/>
    <property type="evidence" value="ECO:0000314"/>
    <property type="project" value="FlyBase"/>
</dbReference>
<dbReference type="GO" id="GO:0019731">
    <property type="term" value="P:antibacterial humoral response"/>
    <property type="evidence" value="ECO:0000314"/>
    <property type="project" value="FlyBase"/>
</dbReference>
<dbReference type="GO" id="GO:0050829">
    <property type="term" value="P:defense response to Gram-negative bacterium"/>
    <property type="evidence" value="ECO:0000314"/>
    <property type="project" value="UniProtKB"/>
</dbReference>
<dbReference type="GO" id="GO:0050830">
    <property type="term" value="P:defense response to Gram-positive bacterium"/>
    <property type="evidence" value="ECO:0000314"/>
    <property type="project" value="UniProtKB"/>
</dbReference>
<dbReference type="GO" id="GO:0051607">
    <property type="term" value="P:defense response to virus"/>
    <property type="evidence" value="ECO:0000316"/>
    <property type="project" value="FlyBase"/>
</dbReference>
<dbReference type="GO" id="GO:0006959">
    <property type="term" value="P:humoral immune response"/>
    <property type="evidence" value="ECO:0000270"/>
    <property type="project" value="FlyBase"/>
</dbReference>
<dbReference type="GO" id="GO:0045087">
    <property type="term" value="P:innate immune response"/>
    <property type="evidence" value="ECO:0007669"/>
    <property type="project" value="UniProtKB-KW"/>
</dbReference>
<dbReference type="GO" id="GO:0140460">
    <property type="term" value="P:response to Gram-negative bacterium"/>
    <property type="evidence" value="ECO:0000316"/>
    <property type="project" value="FlyBase"/>
</dbReference>
<dbReference type="InterPro" id="IPR000875">
    <property type="entry name" value="Cecropin"/>
</dbReference>
<dbReference type="InterPro" id="IPR020400">
    <property type="entry name" value="Cecropin_insect"/>
</dbReference>
<dbReference type="PANTHER" id="PTHR38329">
    <property type="entry name" value="CECROPIN-A1-RELATED"/>
    <property type="match status" value="1"/>
</dbReference>
<dbReference type="PANTHER" id="PTHR38329:SF1">
    <property type="entry name" value="CECROPIN-A1-RELATED"/>
    <property type="match status" value="1"/>
</dbReference>
<dbReference type="Pfam" id="PF00272">
    <property type="entry name" value="Cecropin"/>
    <property type="match status" value="1"/>
</dbReference>
<dbReference type="PROSITE" id="PS00268">
    <property type="entry name" value="CECROPIN"/>
    <property type="match status" value="1"/>
</dbReference>
<proteinExistence type="evidence at transcript level"/>
<accession>O16829</accession>
<accession>O16830</accession>
<accession>O16831</accession>
<accession>O16832</accession>
<accession>O16833</accession>
<accession>O16834</accession>
<accession>O16835</accession>
<accession>O16836</accession>
<accession>O16837</accession>
<accession>P29561</accession>
<accession>Q9VA89</accession>
<organism>
    <name type="scientific">Drosophila melanogaster</name>
    <name type="common">Fruit fly</name>
    <dbReference type="NCBI Taxonomy" id="7227"/>
    <lineage>
        <taxon>Eukaryota</taxon>
        <taxon>Metazoa</taxon>
        <taxon>Ecdysozoa</taxon>
        <taxon>Arthropoda</taxon>
        <taxon>Hexapoda</taxon>
        <taxon>Insecta</taxon>
        <taxon>Pterygota</taxon>
        <taxon>Neoptera</taxon>
        <taxon>Endopterygota</taxon>
        <taxon>Diptera</taxon>
        <taxon>Brachycera</taxon>
        <taxon>Muscomorpha</taxon>
        <taxon>Ephydroidea</taxon>
        <taxon>Drosophilidae</taxon>
        <taxon>Drosophila</taxon>
        <taxon>Sophophora</taxon>
    </lineage>
</organism>